<dbReference type="EC" id="3.5.3.8" evidence="1"/>
<dbReference type="EMBL" id="BX571856">
    <property type="protein sequence ID" value="CAG41400.1"/>
    <property type="molecule type" value="Genomic_DNA"/>
</dbReference>
<dbReference type="RefSeq" id="WP_000277982.1">
    <property type="nucleotide sequence ID" value="NC_002952.2"/>
</dbReference>
<dbReference type="SMR" id="Q6GEA1"/>
<dbReference type="KEGG" id="sar:SAR2420"/>
<dbReference type="HOGENOM" id="CLU_039478_2_0_9"/>
<dbReference type="UniPathway" id="UPA00379">
    <property type="reaction ID" value="UER00552"/>
</dbReference>
<dbReference type="Proteomes" id="UP000000596">
    <property type="component" value="Chromosome"/>
</dbReference>
<dbReference type="GO" id="GO:0008783">
    <property type="term" value="F:agmatinase activity"/>
    <property type="evidence" value="ECO:0007669"/>
    <property type="project" value="TreeGrafter"/>
</dbReference>
<dbReference type="GO" id="GO:0050415">
    <property type="term" value="F:formimidoylglutamase activity"/>
    <property type="evidence" value="ECO:0007669"/>
    <property type="project" value="UniProtKB-UniRule"/>
</dbReference>
<dbReference type="GO" id="GO:0030145">
    <property type="term" value="F:manganese ion binding"/>
    <property type="evidence" value="ECO:0007669"/>
    <property type="project" value="UniProtKB-UniRule"/>
</dbReference>
<dbReference type="GO" id="GO:0019556">
    <property type="term" value="P:L-histidine catabolic process to glutamate and formamide"/>
    <property type="evidence" value="ECO:0007669"/>
    <property type="project" value="UniProtKB-UniPathway"/>
</dbReference>
<dbReference type="GO" id="GO:0019557">
    <property type="term" value="P:L-histidine catabolic process to glutamate and formate"/>
    <property type="evidence" value="ECO:0007669"/>
    <property type="project" value="UniProtKB-UniPathway"/>
</dbReference>
<dbReference type="GO" id="GO:0033389">
    <property type="term" value="P:putrescine biosynthetic process from arginine, via agmatine"/>
    <property type="evidence" value="ECO:0007669"/>
    <property type="project" value="TreeGrafter"/>
</dbReference>
<dbReference type="CDD" id="cd09988">
    <property type="entry name" value="Formimidoylglutamase"/>
    <property type="match status" value="1"/>
</dbReference>
<dbReference type="Gene3D" id="3.40.800.10">
    <property type="entry name" value="Ureohydrolase domain"/>
    <property type="match status" value="1"/>
</dbReference>
<dbReference type="HAMAP" id="MF_00737">
    <property type="entry name" value="Formimidoylglutam"/>
    <property type="match status" value="1"/>
</dbReference>
<dbReference type="InterPro" id="IPR005923">
    <property type="entry name" value="HutG"/>
</dbReference>
<dbReference type="InterPro" id="IPR006035">
    <property type="entry name" value="Ureohydrolase"/>
</dbReference>
<dbReference type="InterPro" id="IPR023696">
    <property type="entry name" value="Ureohydrolase_dom_sf"/>
</dbReference>
<dbReference type="NCBIfam" id="TIGR01227">
    <property type="entry name" value="hutG"/>
    <property type="match status" value="1"/>
</dbReference>
<dbReference type="PANTHER" id="PTHR11358">
    <property type="entry name" value="ARGINASE/AGMATINASE"/>
    <property type="match status" value="1"/>
</dbReference>
<dbReference type="PANTHER" id="PTHR11358:SF35">
    <property type="entry name" value="FORMIMIDOYLGLUTAMASE"/>
    <property type="match status" value="1"/>
</dbReference>
<dbReference type="Pfam" id="PF00491">
    <property type="entry name" value="Arginase"/>
    <property type="match status" value="1"/>
</dbReference>
<dbReference type="PIRSF" id="PIRSF036979">
    <property type="entry name" value="Arginase"/>
    <property type="match status" value="1"/>
</dbReference>
<dbReference type="SUPFAM" id="SSF52768">
    <property type="entry name" value="Arginase/deacetylase"/>
    <property type="match status" value="1"/>
</dbReference>
<dbReference type="PROSITE" id="PS51409">
    <property type="entry name" value="ARGINASE_2"/>
    <property type="match status" value="1"/>
</dbReference>
<sequence>MYKQGEPNLWTGRLDSETDPKKFRHFQTVTFEDLSKLEKSSTPSGVGILGYAVDKGVALNKGRIGAKEGPDAIKQAFAGLPDLNQCETLVDYGNVYHDHEELIDTQKEFATLAAKSIVNHRQTFLLGGGHDIAYAQYLATRKVYPTQSIGVINIDAHFDTRAEQQSTSGTSFRQILEEDENTGYLVLGIAQGGNTQSLFDYAKEKKIDYVFADELLSHVSPTIKDMIERFIHEHDVIMFTICMDVIDSAFAPGVSAPAVLGLYPHTVLELAKRIIPSDKVSSVSIAEMNPTYDADNRTAKLVANLVHHFLK</sequence>
<proteinExistence type="inferred from homology"/>
<feature type="chain" id="PRO_0000173769" description="Formimidoylglutamase">
    <location>
        <begin position="1"/>
        <end position="311"/>
    </location>
</feature>
<feature type="binding site" evidence="1">
    <location>
        <position position="130"/>
    </location>
    <ligand>
        <name>Mn(2+)</name>
        <dbReference type="ChEBI" id="CHEBI:29035"/>
        <label>1</label>
    </ligand>
</feature>
<feature type="binding site" evidence="1">
    <location>
        <position position="155"/>
    </location>
    <ligand>
        <name>Mn(2+)</name>
        <dbReference type="ChEBI" id="CHEBI:29035"/>
        <label>1</label>
    </ligand>
</feature>
<feature type="binding site" evidence="1">
    <location>
        <position position="155"/>
    </location>
    <ligand>
        <name>Mn(2+)</name>
        <dbReference type="ChEBI" id="CHEBI:29035"/>
        <label>2</label>
    </ligand>
</feature>
<feature type="binding site" evidence="1">
    <location>
        <position position="157"/>
    </location>
    <ligand>
        <name>Mn(2+)</name>
        <dbReference type="ChEBI" id="CHEBI:29035"/>
        <label>2</label>
    </ligand>
</feature>
<feature type="binding site" evidence="1">
    <location>
        <position position="159"/>
    </location>
    <ligand>
        <name>Mn(2+)</name>
        <dbReference type="ChEBI" id="CHEBI:29035"/>
        <label>1</label>
    </ligand>
</feature>
<feature type="binding site" evidence="1">
    <location>
        <position position="242"/>
    </location>
    <ligand>
        <name>Mn(2+)</name>
        <dbReference type="ChEBI" id="CHEBI:29035"/>
        <label>1</label>
    </ligand>
</feature>
<feature type="binding site" evidence="1">
    <location>
        <position position="242"/>
    </location>
    <ligand>
        <name>Mn(2+)</name>
        <dbReference type="ChEBI" id="CHEBI:29035"/>
        <label>2</label>
    </ligand>
</feature>
<feature type="binding site" evidence="1">
    <location>
        <position position="244"/>
    </location>
    <ligand>
        <name>Mn(2+)</name>
        <dbReference type="ChEBI" id="CHEBI:29035"/>
        <label>2</label>
    </ligand>
</feature>
<keyword id="KW-0369">Histidine metabolism</keyword>
<keyword id="KW-0378">Hydrolase</keyword>
<keyword id="KW-0464">Manganese</keyword>
<keyword id="KW-0479">Metal-binding</keyword>
<accession>Q6GEA1</accession>
<organism>
    <name type="scientific">Staphylococcus aureus (strain MRSA252)</name>
    <dbReference type="NCBI Taxonomy" id="282458"/>
    <lineage>
        <taxon>Bacteria</taxon>
        <taxon>Bacillati</taxon>
        <taxon>Bacillota</taxon>
        <taxon>Bacilli</taxon>
        <taxon>Bacillales</taxon>
        <taxon>Staphylococcaceae</taxon>
        <taxon>Staphylococcus</taxon>
    </lineage>
</organism>
<reference key="1">
    <citation type="journal article" date="2004" name="Proc. Natl. Acad. Sci. U.S.A.">
        <title>Complete genomes of two clinical Staphylococcus aureus strains: evidence for the rapid evolution of virulence and drug resistance.</title>
        <authorList>
            <person name="Holden M.T.G."/>
            <person name="Feil E.J."/>
            <person name="Lindsay J.A."/>
            <person name="Peacock S.J."/>
            <person name="Day N.P.J."/>
            <person name="Enright M.C."/>
            <person name="Foster T.J."/>
            <person name="Moore C.E."/>
            <person name="Hurst L."/>
            <person name="Atkin R."/>
            <person name="Barron A."/>
            <person name="Bason N."/>
            <person name="Bentley S.D."/>
            <person name="Chillingworth C."/>
            <person name="Chillingworth T."/>
            <person name="Churcher C."/>
            <person name="Clark L."/>
            <person name="Corton C."/>
            <person name="Cronin A."/>
            <person name="Doggett J."/>
            <person name="Dowd L."/>
            <person name="Feltwell T."/>
            <person name="Hance Z."/>
            <person name="Harris B."/>
            <person name="Hauser H."/>
            <person name="Holroyd S."/>
            <person name="Jagels K."/>
            <person name="James K.D."/>
            <person name="Lennard N."/>
            <person name="Line A."/>
            <person name="Mayes R."/>
            <person name="Moule S."/>
            <person name="Mungall K."/>
            <person name="Ormond D."/>
            <person name="Quail M.A."/>
            <person name="Rabbinowitsch E."/>
            <person name="Rutherford K.M."/>
            <person name="Sanders M."/>
            <person name="Sharp S."/>
            <person name="Simmonds M."/>
            <person name="Stevens K."/>
            <person name="Whitehead S."/>
            <person name="Barrell B.G."/>
            <person name="Spratt B.G."/>
            <person name="Parkhill J."/>
        </authorList>
    </citation>
    <scope>NUCLEOTIDE SEQUENCE [LARGE SCALE GENOMIC DNA]</scope>
    <source>
        <strain>MRSA252</strain>
    </source>
</reference>
<evidence type="ECO:0000255" key="1">
    <source>
        <dbReference type="HAMAP-Rule" id="MF_00737"/>
    </source>
</evidence>
<gene>
    <name evidence="1" type="primary">hutG</name>
    <name type="ordered locus">SAR2420</name>
</gene>
<name>HUTG_STAAR</name>
<protein>
    <recommendedName>
        <fullName evidence="1">Formimidoylglutamase</fullName>
        <ecNumber evidence="1">3.5.3.8</ecNumber>
    </recommendedName>
    <alternativeName>
        <fullName evidence="1">Formiminoglutamase</fullName>
    </alternativeName>
    <alternativeName>
        <fullName evidence="1">Formiminoglutamate hydrolase</fullName>
    </alternativeName>
</protein>
<comment type="function">
    <text evidence="1">Catalyzes the conversion of N-formimidoyl-L-glutamate to L-glutamate and formamide.</text>
</comment>
<comment type="catalytic activity">
    <reaction evidence="1">
        <text>N-formimidoyl-L-glutamate + H2O = formamide + L-glutamate</text>
        <dbReference type="Rhea" id="RHEA:22492"/>
        <dbReference type="ChEBI" id="CHEBI:15377"/>
        <dbReference type="ChEBI" id="CHEBI:16397"/>
        <dbReference type="ChEBI" id="CHEBI:29985"/>
        <dbReference type="ChEBI" id="CHEBI:58928"/>
        <dbReference type="EC" id="3.5.3.8"/>
    </reaction>
</comment>
<comment type="cofactor">
    <cofactor evidence="1">
        <name>Mn(2+)</name>
        <dbReference type="ChEBI" id="CHEBI:29035"/>
    </cofactor>
    <text evidence="1">Binds 2 manganese ions per subunit.</text>
</comment>
<comment type="pathway">
    <text evidence="1">Amino-acid degradation; L-histidine degradation into L-glutamate; L-glutamate from N-formimidoyl-L-glutamate (hydrolase route): step 1/1.</text>
</comment>
<comment type="similarity">
    <text evidence="1">Belongs to the arginase family.</text>
</comment>